<dbReference type="EMBL" id="AC107207">
    <property type="protein sequence ID" value="AAR87329.1"/>
    <property type="molecule type" value="Genomic_DNA"/>
</dbReference>
<dbReference type="EMBL" id="AC133450">
    <property type="protein sequence ID" value="AAT85058.1"/>
    <property type="molecule type" value="Genomic_DNA"/>
</dbReference>
<dbReference type="EMBL" id="DP000009">
    <property type="protein sequence ID" value="ABF99077.1"/>
    <property type="molecule type" value="Genomic_DNA"/>
</dbReference>
<dbReference type="EMBL" id="AP008209">
    <property type="protein sequence ID" value="BAF13311.1"/>
    <property type="molecule type" value="Genomic_DNA"/>
</dbReference>
<dbReference type="EMBL" id="AP014959">
    <property type="protein sequence ID" value="BAS86580.1"/>
    <property type="molecule type" value="Genomic_DNA"/>
</dbReference>
<dbReference type="EMBL" id="CM000140">
    <property type="protein sequence ID" value="EAZ28715.1"/>
    <property type="molecule type" value="Genomic_DNA"/>
</dbReference>
<dbReference type="EMBL" id="AK100054">
    <property type="status" value="NOT_ANNOTATED_CDS"/>
    <property type="molecule type" value="mRNA"/>
</dbReference>
<dbReference type="RefSeq" id="XP_015627925.1">
    <property type="nucleotide sequence ID" value="XM_015772439.1"/>
</dbReference>
<dbReference type="FunCoup" id="Q75KA9">
    <property type="interactions" value="926"/>
</dbReference>
<dbReference type="STRING" id="39947.Q75KA9"/>
<dbReference type="PaxDb" id="39947-Q75KA9"/>
<dbReference type="EnsemblPlants" id="Os03t0769600-01">
    <property type="protein sequence ID" value="Os03t0769600-01"/>
    <property type="gene ID" value="Os03g0769600"/>
</dbReference>
<dbReference type="Gramene" id="Os03t0769600-01">
    <property type="protein sequence ID" value="Os03t0769600-01"/>
    <property type="gene ID" value="Os03g0769600"/>
</dbReference>
<dbReference type="KEGG" id="dosa:Os03g0769600"/>
<dbReference type="eggNOG" id="ENOG502QRFF">
    <property type="taxonomic scope" value="Eukaryota"/>
</dbReference>
<dbReference type="HOGENOM" id="CLU_034630_0_0_1"/>
<dbReference type="InParanoid" id="Q75KA9"/>
<dbReference type="OMA" id="RFWIDYT"/>
<dbReference type="OrthoDB" id="565797at2759"/>
<dbReference type="Proteomes" id="UP000000763">
    <property type="component" value="Chromosome 3"/>
</dbReference>
<dbReference type="Proteomes" id="UP000007752">
    <property type="component" value="Chromosome 3"/>
</dbReference>
<dbReference type="Proteomes" id="UP000059680">
    <property type="component" value="Chromosome 3"/>
</dbReference>
<dbReference type="GO" id="GO:0009535">
    <property type="term" value="C:chloroplast thylakoid membrane"/>
    <property type="evidence" value="ECO:0007669"/>
    <property type="project" value="UniProtKB-SubCell"/>
</dbReference>
<dbReference type="GO" id="GO:0017004">
    <property type="term" value="P:cytochrome complex assembly"/>
    <property type="evidence" value="ECO:0007669"/>
    <property type="project" value="UniProtKB-KW"/>
</dbReference>
<dbReference type="HAMAP" id="MF_01392">
    <property type="entry name" value="CytC_Ccs1"/>
    <property type="match status" value="1"/>
</dbReference>
<dbReference type="InterPro" id="IPR023494">
    <property type="entry name" value="Cyt_c_bgen_Ccs1/CcsB/ResB"/>
</dbReference>
<dbReference type="InterPro" id="IPR007816">
    <property type="entry name" value="ResB-like_domain"/>
</dbReference>
<dbReference type="PANTHER" id="PTHR31566">
    <property type="entry name" value="CYTOCHROME C BIOGENESIS PROTEIN CCS1, CHLOROPLASTIC"/>
    <property type="match status" value="1"/>
</dbReference>
<dbReference type="PANTHER" id="PTHR31566:SF0">
    <property type="entry name" value="CYTOCHROME C BIOGENESIS PROTEIN CCS1, CHLOROPLASTIC"/>
    <property type="match status" value="1"/>
</dbReference>
<dbReference type="Pfam" id="PF05140">
    <property type="entry name" value="ResB"/>
    <property type="match status" value="2"/>
</dbReference>
<comment type="function">
    <text evidence="1">Required during biogenesis of c-type cytochromes (cytochrome c6 and cytochrome f) at the step of heme attachment.</text>
</comment>
<comment type="subunit">
    <text evidence="1">May interact with ccsA.</text>
</comment>
<comment type="subcellular location">
    <subcellularLocation>
        <location evidence="1">Plastid</location>
        <location evidence="1">Chloroplast thylakoid membrane</location>
        <topology evidence="1">Multi-pass membrane protein</topology>
    </subcellularLocation>
</comment>
<comment type="similarity">
    <text evidence="4">Belongs to the Ccs1/CcsB family.</text>
</comment>
<gene>
    <name type="primary">CCS1</name>
    <name type="ordered locus">Os03g0769600</name>
    <name type="ordered locus">LOC_Os03g55970</name>
    <name type="ORF">OsJ_012198</name>
    <name type="ORF">OSJNBa0072F13.17</name>
</gene>
<accession>Q75KA9</accession>
<accession>A0A0P0W436</accession>
<accession>A3AN26</accession>
<proteinExistence type="evidence at transcript level"/>
<sequence length="564" mass="61003">MPSPTCYLLLNPTASRSHHRPRLPLPAAAPPRRRVHVSCDARRTGGGGGGGGVKREAIPAGTGKAKKQVVFFDAAPPVSQRGGGGGGEGEGEGEGEGKVARRKENAALGLVRRLTKRTLSLLSNLPLAISEMFAIAALMALGTVIDQGEAPSYYFEKFPEDNPVFGFITWRWILTPGFDHMFSSPVFLGLLALLAASLMACTYTTQIPIVKVARRWSFMHSAGSIRKQEFAESLPRASIQDLGVILMGYGYEVFTKGPSLYAFKGLAGRFAPIGVHIAMIFIMAGATLSATGSFKGSVDVPQGLNFVIGDVMKPKGVLSFVPDVFNTEVHVNRFYMEYYDSGEVSQFYSDLSLFDLDGKEVMRKTIKVNDPLRYGGVTIYQTDWGFSALQVKKNGEGPFNLAMAPLKLNGDKKLFGTLLPLENSGSSNVKGISMLARDLQSIVLYDQEGKFVGVRRPSSKLPIEIDGNEIVIEDAIGSTGLDLKTDPGIPIVYAGFGALMLTTCISYLSHSQIWALQDGSTVVIGGKTNRAKLEFSEEMNRLLDKVPELISVNEKKIDSKQSAT</sequence>
<feature type="transit peptide" description="Chloroplast" evidence="2">
    <location>
        <begin position="1"/>
        <end position="38"/>
    </location>
</feature>
<feature type="transit peptide" description="Thylakoid" evidence="2">
    <location>
        <begin position="39"/>
        <end status="unknown"/>
    </location>
</feature>
<feature type="chain" id="PRO_0000363639" description="Cytochrome c biogenesis protein CCS1, chloroplastic">
    <location>
        <begin status="unknown"/>
        <end position="564"/>
    </location>
</feature>
<feature type="transmembrane region" description="Helical" evidence="2">
    <location>
        <begin position="125"/>
        <end position="145"/>
    </location>
</feature>
<feature type="transmembrane region" description="Helical" evidence="2">
    <location>
        <begin position="184"/>
        <end position="204"/>
    </location>
</feature>
<feature type="transmembrane region" description="Helical" evidence="2">
    <location>
        <begin position="270"/>
        <end position="290"/>
    </location>
</feature>
<feature type="region of interest" description="Disordered" evidence="3">
    <location>
        <begin position="1"/>
        <end position="36"/>
    </location>
</feature>
<feature type="region of interest" description="Disordered" evidence="3">
    <location>
        <begin position="76"/>
        <end position="99"/>
    </location>
</feature>
<feature type="sequence conflict" description="In Ref. 5; EAZ28715." evidence="4" ref="5">
    <original>E</original>
    <variation>K</variation>
    <location>
        <position position="96"/>
    </location>
</feature>
<feature type="sequence conflict" description="In Ref. 6; AK100054." evidence="4" ref="6">
    <original>H</original>
    <variation>R</variation>
    <location>
        <position position="220"/>
    </location>
</feature>
<keyword id="KW-0150">Chloroplast</keyword>
<keyword id="KW-0201">Cytochrome c-type biogenesis</keyword>
<keyword id="KW-0472">Membrane</keyword>
<keyword id="KW-0934">Plastid</keyword>
<keyword id="KW-1185">Reference proteome</keyword>
<keyword id="KW-0793">Thylakoid</keyword>
<keyword id="KW-0809">Transit peptide</keyword>
<keyword id="KW-0812">Transmembrane</keyword>
<keyword id="KW-1133">Transmembrane helix</keyword>
<name>CCS1_ORYSJ</name>
<organism>
    <name type="scientific">Oryza sativa subsp. japonica</name>
    <name type="common">Rice</name>
    <dbReference type="NCBI Taxonomy" id="39947"/>
    <lineage>
        <taxon>Eukaryota</taxon>
        <taxon>Viridiplantae</taxon>
        <taxon>Streptophyta</taxon>
        <taxon>Embryophyta</taxon>
        <taxon>Tracheophyta</taxon>
        <taxon>Spermatophyta</taxon>
        <taxon>Magnoliopsida</taxon>
        <taxon>Liliopsida</taxon>
        <taxon>Poales</taxon>
        <taxon>Poaceae</taxon>
        <taxon>BOP clade</taxon>
        <taxon>Oryzoideae</taxon>
        <taxon>Oryzeae</taxon>
        <taxon>Oryzinae</taxon>
        <taxon>Oryza</taxon>
        <taxon>Oryza sativa</taxon>
    </lineage>
</organism>
<reference key="1">
    <citation type="journal article" date="2005" name="Genome Res.">
        <title>Sequence, annotation, and analysis of synteny between rice chromosome 3 and diverged grass species.</title>
        <authorList>
            <consortium name="The rice chromosome 3 sequencing consortium"/>
            <person name="Buell C.R."/>
            <person name="Yuan Q."/>
            <person name="Ouyang S."/>
            <person name="Liu J."/>
            <person name="Zhu W."/>
            <person name="Wang A."/>
            <person name="Maiti R."/>
            <person name="Haas B."/>
            <person name="Wortman J."/>
            <person name="Pertea M."/>
            <person name="Jones K.M."/>
            <person name="Kim M."/>
            <person name="Overton L."/>
            <person name="Tsitrin T."/>
            <person name="Fadrosh D."/>
            <person name="Bera J."/>
            <person name="Weaver B."/>
            <person name="Jin S."/>
            <person name="Johri S."/>
            <person name="Reardon M."/>
            <person name="Webb K."/>
            <person name="Hill J."/>
            <person name="Moffat K."/>
            <person name="Tallon L."/>
            <person name="Van Aken S."/>
            <person name="Lewis M."/>
            <person name="Utterback T."/>
            <person name="Feldblyum T."/>
            <person name="Zismann V."/>
            <person name="Iobst S."/>
            <person name="Hsiao J."/>
            <person name="de Vazeille A.R."/>
            <person name="Salzberg S.L."/>
            <person name="White O."/>
            <person name="Fraser C.M."/>
            <person name="Yu Y."/>
            <person name="Kim H."/>
            <person name="Rambo T."/>
            <person name="Currie J."/>
            <person name="Collura K."/>
            <person name="Kernodle-Thompson S."/>
            <person name="Wei F."/>
            <person name="Kudrna K."/>
            <person name="Ammiraju J.S.S."/>
            <person name="Luo M."/>
            <person name="Goicoechea J.L."/>
            <person name="Wing R.A."/>
            <person name="Henry D."/>
            <person name="Oates R."/>
            <person name="Palmer M."/>
            <person name="Pries G."/>
            <person name="Saski C."/>
            <person name="Simmons J."/>
            <person name="Soderlund C."/>
            <person name="Nelson W."/>
            <person name="de la Bastide M."/>
            <person name="Spiegel L."/>
            <person name="Nascimento L."/>
            <person name="Huang E."/>
            <person name="Preston R."/>
            <person name="Zutavern T."/>
            <person name="Palmer L."/>
            <person name="O'Shaughnessy A."/>
            <person name="Dike S."/>
            <person name="McCombie W.R."/>
            <person name="Minx P."/>
            <person name="Cordum H."/>
            <person name="Wilson R."/>
            <person name="Jin W."/>
            <person name="Lee H.R."/>
            <person name="Jiang J."/>
            <person name="Jackson S."/>
        </authorList>
    </citation>
    <scope>NUCLEOTIDE SEQUENCE [LARGE SCALE GENOMIC DNA]</scope>
    <source>
        <strain>cv. Nipponbare</strain>
    </source>
</reference>
<reference key="2">
    <citation type="journal article" date="2005" name="Nature">
        <title>The map-based sequence of the rice genome.</title>
        <authorList>
            <consortium name="International rice genome sequencing project (IRGSP)"/>
        </authorList>
    </citation>
    <scope>NUCLEOTIDE SEQUENCE [LARGE SCALE GENOMIC DNA]</scope>
    <source>
        <strain>cv. Nipponbare</strain>
    </source>
</reference>
<reference key="3">
    <citation type="journal article" date="2008" name="Nucleic Acids Res.">
        <title>The rice annotation project database (RAP-DB): 2008 update.</title>
        <authorList>
            <consortium name="The rice annotation project (RAP)"/>
        </authorList>
    </citation>
    <scope>GENOME REANNOTATION</scope>
    <source>
        <strain>cv. Nipponbare</strain>
    </source>
</reference>
<reference key="4">
    <citation type="journal article" date="2013" name="Rice">
        <title>Improvement of the Oryza sativa Nipponbare reference genome using next generation sequence and optical map data.</title>
        <authorList>
            <person name="Kawahara Y."/>
            <person name="de la Bastide M."/>
            <person name="Hamilton J.P."/>
            <person name="Kanamori H."/>
            <person name="McCombie W.R."/>
            <person name="Ouyang S."/>
            <person name="Schwartz D.C."/>
            <person name="Tanaka T."/>
            <person name="Wu J."/>
            <person name="Zhou S."/>
            <person name="Childs K.L."/>
            <person name="Davidson R.M."/>
            <person name="Lin H."/>
            <person name="Quesada-Ocampo L."/>
            <person name="Vaillancourt B."/>
            <person name="Sakai H."/>
            <person name="Lee S.S."/>
            <person name="Kim J."/>
            <person name="Numa H."/>
            <person name="Itoh T."/>
            <person name="Buell C.R."/>
            <person name="Matsumoto T."/>
        </authorList>
    </citation>
    <scope>GENOME REANNOTATION</scope>
    <source>
        <strain>cv. Nipponbare</strain>
    </source>
</reference>
<reference key="5">
    <citation type="journal article" date="2005" name="PLoS Biol.">
        <title>The genomes of Oryza sativa: a history of duplications.</title>
        <authorList>
            <person name="Yu J."/>
            <person name="Wang J."/>
            <person name="Lin W."/>
            <person name="Li S."/>
            <person name="Li H."/>
            <person name="Zhou J."/>
            <person name="Ni P."/>
            <person name="Dong W."/>
            <person name="Hu S."/>
            <person name="Zeng C."/>
            <person name="Zhang J."/>
            <person name="Zhang Y."/>
            <person name="Li R."/>
            <person name="Xu Z."/>
            <person name="Li S."/>
            <person name="Li X."/>
            <person name="Zheng H."/>
            <person name="Cong L."/>
            <person name="Lin L."/>
            <person name="Yin J."/>
            <person name="Geng J."/>
            <person name="Li G."/>
            <person name="Shi J."/>
            <person name="Liu J."/>
            <person name="Lv H."/>
            <person name="Li J."/>
            <person name="Wang J."/>
            <person name="Deng Y."/>
            <person name="Ran L."/>
            <person name="Shi X."/>
            <person name="Wang X."/>
            <person name="Wu Q."/>
            <person name="Li C."/>
            <person name="Ren X."/>
            <person name="Wang J."/>
            <person name="Wang X."/>
            <person name="Li D."/>
            <person name="Liu D."/>
            <person name="Zhang X."/>
            <person name="Ji Z."/>
            <person name="Zhao W."/>
            <person name="Sun Y."/>
            <person name="Zhang Z."/>
            <person name="Bao J."/>
            <person name="Han Y."/>
            <person name="Dong L."/>
            <person name="Ji J."/>
            <person name="Chen P."/>
            <person name="Wu S."/>
            <person name="Liu J."/>
            <person name="Xiao Y."/>
            <person name="Bu D."/>
            <person name="Tan J."/>
            <person name="Yang L."/>
            <person name="Ye C."/>
            <person name="Zhang J."/>
            <person name="Xu J."/>
            <person name="Zhou Y."/>
            <person name="Yu Y."/>
            <person name="Zhang B."/>
            <person name="Zhuang S."/>
            <person name="Wei H."/>
            <person name="Liu B."/>
            <person name="Lei M."/>
            <person name="Yu H."/>
            <person name="Li Y."/>
            <person name="Xu H."/>
            <person name="Wei S."/>
            <person name="He X."/>
            <person name="Fang L."/>
            <person name="Zhang Z."/>
            <person name="Zhang Y."/>
            <person name="Huang X."/>
            <person name="Su Z."/>
            <person name="Tong W."/>
            <person name="Li J."/>
            <person name="Tong Z."/>
            <person name="Li S."/>
            <person name="Ye J."/>
            <person name="Wang L."/>
            <person name="Fang L."/>
            <person name="Lei T."/>
            <person name="Chen C.-S."/>
            <person name="Chen H.-C."/>
            <person name="Xu Z."/>
            <person name="Li H."/>
            <person name="Huang H."/>
            <person name="Zhang F."/>
            <person name="Xu H."/>
            <person name="Li N."/>
            <person name="Zhao C."/>
            <person name="Li S."/>
            <person name="Dong L."/>
            <person name="Huang Y."/>
            <person name="Li L."/>
            <person name="Xi Y."/>
            <person name="Qi Q."/>
            <person name="Li W."/>
            <person name="Zhang B."/>
            <person name="Hu W."/>
            <person name="Zhang Y."/>
            <person name="Tian X."/>
            <person name="Jiao Y."/>
            <person name="Liang X."/>
            <person name="Jin J."/>
            <person name="Gao L."/>
            <person name="Zheng W."/>
            <person name="Hao B."/>
            <person name="Liu S.-M."/>
            <person name="Wang W."/>
            <person name="Yuan L."/>
            <person name="Cao M."/>
            <person name="McDermott J."/>
            <person name="Samudrala R."/>
            <person name="Wang J."/>
            <person name="Wong G.K.-S."/>
            <person name="Yang H."/>
        </authorList>
    </citation>
    <scope>NUCLEOTIDE SEQUENCE [LARGE SCALE GENOMIC DNA]</scope>
    <source>
        <strain>cv. Nipponbare</strain>
    </source>
</reference>
<reference key="6">
    <citation type="journal article" date="2003" name="Science">
        <title>Collection, mapping, and annotation of over 28,000 cDNA clones from japonica rice.</title>
        <authorList>
            <consortium name="The rice full-length cDNA consortium"/>
        </authorList>
    </citation>
    <scope>NUCLEOTIDE SEQUENCE [LARGE SCALE MRNA]</scope>
    <source>
        <strain>cv. Nipponbare</strain>
    </source>
</reference>
<protein>
    <recommendedName>
        <fullName>Cytochrome c biogenesis protein CCS1, chloroplastic</fullName>
    </recommendedName>
    <alternativeName>
        <fullName>C-type cytochrome synthesis protein 1</fullName>
    </alternativeName>
</protein>
<evidence type="ECO:0000250" key="1"/>
<evidence type="ECO:0000255" key="2"/>
<evidence type="ECO:0000256" key="3">
    <source>
        <dbReference type="SAM" id="MobiDB-lite"/>
    </source>
</evidence>
<evidence type="ECO:0000305" key="4"/>